<organism>
    <name type="scientific">Escherichia coli (strain K12)</name>
    <dbReference type="NCBI Taxonomy" id="83333"/>
    <lineage>
        <taxon>Bacteria</taxon>
        <taxon>Pseudomonadati</taxon>
        <taxon>Pseudomonadota</taxon>
        <taxon>Gammaproteobacteria</taxon>
        <taxon>Enterobacterales</taxon>
        <taxon>Enterobacteriaceae</taxon>
        <taxon>Escherichia</taxon>
    </lineage>
</organism>
<gene>
    <name type="primary">xerD</name>
    <name type="synonym">xprB</name>
    <name type="ordered locus">b2894</name>
    <name type="ordered locus">JW2862</name>
</gene>
<feature type="chain" id="PRO_0000095386" description="Tyrosine recombinase XerD">
    <location>
        <begin position="1"/>
        <end position="298"/>
    </location>
</feature>
<feature type="domain" description="Core-binding (CB)" evidence="3">
    <location>
        <begin position="2"/>
        <end position="87"/>
    </location>
</feature>
<feature type="domain" description="Tyr recombinase" evidence="2">
    <location>
        <begin position="108"/>
        <end position="292"/>
    </location>
</feature>
<feature type="active site" evidence="2">
    <location>
        <position position="148"/>
    </location>
</feature>
<feature type="active site" evidence="2">
    <location>
        <position position="172"/>
    </location>
</feature>
<feature type="active site" evidence="2">
    <location>
        <position position="244"/>
    </location>
</feature>
<feature type="active site" evidence="2">
    <location>
        <position position="247"/>
    </location>
</feature>
<feature type="active site" evidence="2">
    <location>
        <position position="270"/>
    </location>
</feature>
<feature type="active site" description="O-(3'-phospho-DNA)-tyrosine intermediate" evidence="2">
    <location>
        <position position="279"/>
    </location>
</feature>
<feature type="mutagenesis site" description="Abolishes DNA cleavage activity." evidence="9">
    <original>R</original>
    <variation>K</variation>
    <location>
        <position position="148"/>
    </location>
</feature>
<feature type="mutagenesis site" description="Abolishes DNA religation activity." evidence="9">
    <original>H</original>
    <variation>L</variation>
    <location>
        <position position="244"/>
    </location>
</feature>
<feature type="mutagenesis site" description="Abolishes DNA cleavage activity." evidence="8 9">
    <original>R</original>
    <variation>Q</variation>
    <location>
        <position position="247"/>
    </location>
</feature>
<feature type="mutagenesis site" description="Abolishes plasmid resolution but not chromosomal recombination." evidence="5">
    <original>NHG</original>
    <variation>ESS</variation>
    <location>
        <begin position="256"/>
        <end position="258"/>
    </location>
</feature>
<feature type="mutagenesis site" description="Abolishes DNA cleavage activity." evidence="7 9">
    <original>Y</original>
    <variation>F</variation>
    <location>
        <position position="279"/>
    </location>
</feature>
<feature type="mutagenesis site" description="Abolishes DNA recombination (in vitro)." evidence="4">
    <original>H</original>
    <variation>Q</variation>
    <variation>E</variation>
    <location>
        <position position="294"/>
    </location>
</feature>
<feature type="mutagenesis site" description="Abolishes DNA recombination (in vitro)." evidence="4">
    <original>H</original>
    <variation>E</variation>
    <location>
        <position position="295"/>
    </location>
</feature>
<feature type="mutagenesis site" description="Abolishes DNA recombination (in vitro)." evidence="4">
    <original>R</original>
    <variation>E</variation>
    <location>
        <position position="297"/>
    </location>
</feature>
<feature type="mutagenesis site" description="Reduces chromosomal recombination but not plasmid resolution." evidence="4">
    <original>A</original>
    <variation>Q</variation>
    <location>
        <position position="298"/>
    </location>
</feature>
<feature type="helix" evidence="11">
    <location>
        <begin position="4"/>
        <end position="17"/>
    </location>
</feature>
<feature type="helix" evidence="11">
    <location>
        <begin position="23"/>
        <end position="42"/>
    </location>
</feature>
<feature type="turn" evidence="11">
    <location>
        <begin position="47"/>
        <end position="49"/>
    </location>
</feature>
<feature type="helix" evidence="11">
    <location>
        <begin position="52"/>
        <end position="60"/>
    </location>
</feature>
<feature type="helix" evidence="11">
    <location>
        <begin position="72"/>
        <end position="88"/>
    </location>
</feature>
<feature type="strand" evidence="11">
    <location>
        <begin position="91"/>
        <end position="94"/>
    </location>
</feature>
<feature type="helix" evidence="11">
    <location>
        <begin position="115"/>
        <end position="123"/>
    </location>
</feature>
<feature type="helix" evidence="11">
    <location>
        <begin position="130"/>
        <end position="145"/>
    </location>
</feature>
<feature type="helix" evidence="11">
    <location>
        <begin position="149"/>
        <end position="152"/>
    </location>
</feature>
<feature type="helix" evidence="11">
    <location>
        <begin position="157"/>
        <end position="159"/>
    </location>
</feature>
<feature type="turn" evidence="11">
    <location>
        <begin position="162"/>
        <end position="165"/>
    </location>
</feature>
<feature type="strand" evidence="11">
    <location>
        <begin position="166"/>
        <end position="170"/>
    </location>
</feature>
<feature type="strand" evidence="11">
    <location>
        <begin position="172"/>
        <end position="174"/>
    </location>
</feature>
<feature type="strand" evidence="11">
    <location>
        <begin position="176"/>
        <end position="180"/>
    </location>
</feature>
<feature type="helix" evidence="11">
    <location>
        <begin position="183"/>
        <end position="195"/>
    </location>
</feature>
<feature type="helix" evidence="11">
    <location>
        <begin position="197"/>
        <end position="201"/>
    </location>
</feature>
<feature type="strand" evidence="11">
    <location>
        <begin position="208"/>
        <end position="211"/>
    </location>
</feature>
<feature type="strand" evidence="11">
    <location>
        <begin position="215"/>
        <end position="217"/>
    </location>
</feature>
<feature type="helix" evidence="11">
    <location>
        <begin position="220"/>
        <end position="233"/>
    </location>
</feature>
<feature type="helix" evidence="11">
    <location>
        <begin position="238"/>
        <end position="240"/>
    </location>
</feature>
<feature type="helix" evidence="11">
    <location>
        <begin position="243"/>
        <end position="257"/>
    </location>
</feature>
<feature type="helix" evidence="11">
    <location>
        <begin position="262"/>
        <end position="264"/>
    </location>
</feature>
<feature type="helix" evidence="11">
    <location>
        <begin position="275"/>
        <end position="291"/>
    </location>
</feature>
<reference key="1">
    <citation type="journal article" date="1991" name="J. Bacteriol.">
        <title>Nucleotide sequence of the Escherichia coli recJ chromosomal region and construction of recJ-overexpression plasmids.</title>
        <authorList>
            <person name="Lovett S.T."/>
            <person name="Kolodner R.D."/>
        </authorList>
    </citation>
    <scope>NUCLEOTIDE SEQUENCE [GENOMIC DNA]</scope>
    <source>
        <strain>K12</strain>
    </source>
</reference>
<reference key="2">
    <citation type="journal article" date="1997" name="Science">
        <title>The complete genome sequence of Escherichia coli K-12.</title>
        <authorList>
            <person name="Blattner F.R."/>
            <person name="Plunkett G. III"/>
            <person name="Bloch C.A."/>
            <person name="Perna N.T."/>
            <person name="Burland V."/>
            <person name="Riley M."/>
            <person name="Collado-Vides J."/>
            <person name="Glasner J.D."/>
            <person name="Rode C.K."/>
            <person name="Mayhew G.F."/>
            <person name="Gregor J."/>
            <person name="Davis N.W."/>
            <person name="Kirkpatrick H.A."/>
            <person name="Goeden M.A."/>
            <person name="Rose D.J."/>
            <person name="Mau B."/>
            <person name="Shao Y."/>
        </authorList>
    </citation>
    <scope>NUCLEOTIDE SEQUENCE [LARGE SCALE GENOMIC DNA]</scope>
    <source>
        <strain>K12 / MG1655 / ATCC 47076</strain>
    </source>
</reference>
<reference key="3">
    <citation type="journal article" date="2006" name="Mol. Syst. Biol.">
        <title>Highly accurate genome sequences of Escherichia coli K-12 strains MG1655 and W3110.</title>
        <authorList>
            <person name="Hayashi K."/>
            <person name="Morooka N."/>
            <person name="Yamamoto Y."/>
            <person name="Fujita K."/>
            <person name="Isono K."/>
            <person name="Choi S."/>
            <person name="Ohtsubo E."/>
            <person name="Baba T."/>
            <person name="Wanner B.L."/>
            <person name="Mori H."/>
            <person name="Horiuchi T."/>
        </authorList>
    </citation>
    <scope>NUCLEOTIDE SEQUENCE [LARGE SCALE GENOMIC DNA]</scope>
    <source>
        <strain>K12 / W3110 / ATCC 27325 / DSM 5911</strain>
    </source>
</reference>
<reference key="4">
    <citation type="journal article" date="1993" name="Cell">
        <title>Two related recombinases are required for site-specific recombination at dif and cer in E. coli K12.</title>
        <authorList>
            <person name="Blakely G."/>
            <person name="May G."/>
            <person name="McCulloch R."/>
            <person name="Arciszewska L.K."/>
            <person name="Burke M."/>
            <person name="Lovett S.T."/>
            <person name="Sherratt D.J."/>
        </authorList>
    </citation>
    <scope>PROTEIN SEQUENCE OF 1-29</scope>
    <scope>CHARACTERIZATION</scope>
    <scope>MUTAGENESIS OF ARG-247</scope>
    <source>
        <strain>K12 / DS941</strain>
    </source>
</reference>
<reference key="5">
    <citation type="journal article" date="1995" name="EMBO J.">
        <title>Xer site-specific recombination in vitro.</title>
        <authorList>
            <person name="Arciszewska L.K."/>
            <person name="Sherratt D.J."/>
        </authorList>
    </citation>
    <scope>FUNCTION</scope>
    <scope>MUTAGENESIS OF TYR-279</scope>
    <source>
        <strain>K12 / DS941</strain>
    </source>
</reference>
<reference key="6">
    <citation type="journal article" date="1997" name="J. Biol. Chem.">
        <title>Xer recombination in Escherichia coli. Site-specific DNA topoisomerase activity of the XerC and XerD recombinases.</title>
        <authorList>
            <person name="Cornet F."/>
            <person name="Hallet B."/>
            <person name="Sherratt D.J."/>
        </authorList>
    </citation>
    <scope>FUNCTION</scope>
    <scope>MUTAGENESIS OF ARG-148; HIS-244; ARG-247 AND TYR-279</scope>
</reference>
<reference key="7">
    <citation type="journal article" date="1999" name="Mol. Microbiol.">
        <title>C-terminal interactions between the XerC and XerD site-specific recombinases.</title>
        <authorList>
            <person name="Spiers A.J."/>
            <person name="Sherratt D.J."/>
        </authorList>
    </citation>
    <scope>INTERACTION WITH XERC</scope>
    <scope>MUTAGENESIS OF HIS-294; HIS-295; ARG-297 AND ALA-298</scope>
    <source>
        <strain>K12 / DS941</strain>
    </source>
</reference>
<reference key="8">
    <citation type="journal article" date="1999" name="Mol. Cell">
        <title>Reciprocal control of catalysis by the tyrosine recombinases XerC and XerD: an enzymatic switch in site-specific recombination.</title>
        <authorList>
            <person name="Hallet B."/>
            <person name="Arciszewska L.K."/>
            <person name="Sherratt D.J."/>
        </authorList>
    </citation>
    <scope>ACTIVITY REGULATION</scope>
    <scope>MUTAGENESIS OF 256-ASN--GLY-258</scope>
    <source>
        <strain>K12 / DS941</strain>
    </source>
</reference>
<reference key="9">
    <citation type="journal article" date="2002" name="Cell">
        <title>FtsK is a DNA motor protein that activates chromosome dimer resolution by switching the catalytic state of the XerC and XerD recombinases.</title>
        <authorList>
            <person name="Aussel L."/>
            <person name="Barre F.-X."/>
            <person name="Aroyo M."/>
            <person name="Stasiak A."/>
            <person name="Stasiak A.Z."/>
            <person name="Sherratt D.J."/>
        </authorList>
    </citation>
    <scope>ACTIVITY REGULATION BY FTSK</scope>
</reference>
<reference key="10">
    <citation type="journal article" date="1997" name="EMBO J.">
        <title>Crystal structure of the site-specific recombinase, XerD.</title>
        <authorList>
            <person name="Subramanya H.S."/>
            <person name="Arciszewska L.K."/>
            <person name="Baker R.A."/>
            <person name="Bird L.E."/>
            <person name="Sherratt D.J."/>
            <person name="Wigley D.B."/>
        </authorList>
    </citation>
    <scope>X-RAY CRYSTALLOGRAPHY (2.5 ANGSTROMS)</scope>
</reference>
<name>XERD_ECOLI</name>
<sequence>MKQDLARIEQFLDALWLEKNLAENTLNAYRRDLSMMVEWLHHRGLTLATAQSDDLQALLAERLEGGYKATSSARLLSAVRRLFQYLYREKFREDDPSAHLASPKLPQRLPKDLSEAQVERLLQAPLIDQPLELRDKAMLEVLYATGLRVSELVGLTMSDISLRQGVVRVIGKGNKERLVPLGEEAVYWLETYLEHGRPWLLNGVSIDVLFPSQRAQQMTRQTFWHRIKHYAVLAGIDSEKLSPHVLRHAFATHLLNHGADLRVVQMLLGHSDLSTTQIYTHVATERLRQLHQQHHPRA</sequence>
<accession>P0A8P8</accession>
<accession>P21891</accession>
<accession>Q2M9U7</accession>
<protein>
    <recommendedName>
        <fullName>Tyrosine recombinase XerD</fullName>
    </recommendedName>
</protein>
<keyword id="KW-0002">3D-structure</keyword>
<keyword id="KW-0131">Cell cycle</keyword>
<keyword id="KW-0132">Cell division</keyword>
<keyword id="KW-0159">Chromosome partition</keyword>
<keyword id="KW-0963">Cytoplasm</keyword>
<keyword id="KW-0903">Direct protein sequencing</keyword>
<keyword id="KW-0229">DNA integration</keyword>
<keyword id="KW-0233">DNA recombination</keyword>
<keyword id="KW-0238">DNA-binding</keyword>
<keyword id="KW-1185">Reference proteome</keyword>
<proteinExistence type="evidence at protein level"/>
<dbReference type="EMBL" id="M54884">
    <property type="protein sequence ID" value="AAA62787.1"/>
    <property type="molecule type" value="Genomic_DNA"/>
</dbReference>
<dbReference type="EMBL" id="U28375">
    <property type="protein sequence ID" value="AAA83075.1"/>
    <property type="molecule type" value="Genomic_DNA"/>
</dbReference>
<dbReference type="EMBL" id="U00096">
    <property type="protein sequence ID" value="AAC75932.1"/>
    <property type="molecule type" value="Genomic_DNA"/>
</dbReference>
<dbReference type="EMBL" id="AP009048">
    <property type="protein sequence ID" value="BAE76959.1"/>
    <property type="molecule type" value="Genomic_DNA"/>
</dbReference>
<dbReference type="PIR" id="A39202">
    <property type="entry name" value="A39202"/>
</dbReference>
<dbReference type="RefSeq" id="NP_417370.1">
    <property type="nucleotide sequence ID" value="NC_000913.3"/>
</dbReference>
<dbReference type="RefSeq" id="WP_000806638.1">
    <property type="nucleotide sequence ID" value="NZ_STEB01000001.1"/>
</dbReference>
<dbReference type="PDB" id="1A0P">
    <property type="method" value="X-ray"/>
    <property type="resolution" value="2.50 A"/>
    <property type="chains" value="A=3-292"/>
</dbReference>
<dbReference type="PDBsum" id="1A0P"/>
<dbReference type="SMR" id="P0A8P8"/>
<dbReference type="BioGRID" id="4262339">
    <property type="interactions" value="491"/>
</dbReference>
<dbReference type="BioGRID" id="851685">
    <property type="interactions" value="2"/>
</dbReference>
<dbReference type="ComplexPortal" id="CPX-5123">
    <property type="entry name" value="XerCD site-specific tyrosine recombinase complex"/>
</dbReference>
<dbReference type="DIP" id="DIP-48125N"/>
<dbReference type="FunCoup" id="P0A8P8">
    <property type="interactions" value="219"/>
</dbReference>
<dbReference type="IntAct" id="P0A8P8">
    <property type="interactions" value="7"/>
</dbReference>
<dbReference type="STRING" id="511145.b2894"/>
<dbReference type="PaxDb" id="511145-b2894"/>
<dbReference type="EnsemblBacteria" id="AAC75932">
    <property type="protein sequence ID" value="AAC75932"/>
    <property type="gene ID" value="b2894"/>
</dbReference>
<dbReference type="GeneID" id="93779108"/>
<dbReference type="GeneID" id="947362"/>
<dbReference type="KEGG" id="ecj:JW2862"/>
<dbReference type="KEGG" id="eco:b2894"/>
<dbReference type="KEGG" id="ecoc:C3026_15870"/>
<dbReference type="PATRIC" id="fig|1411691.4.peg.3839"/>
<dbReference type="EchoBASE" id="EB1064"/>
<dbReference type="eggNOG" id="COG4974">
    <property type="taxonomic scope" value="Bacteria"/>
</dbReference>
<dbReference type="HOGENOM" id="CLU_027562_9_0_6"/>
<dbReference type="InParanoid" id="P0A8P8"/>
<dbReference type="OMA" id="FWYLIKR"/>
<dbReference type="OrthoDB" id="9801717at2"/>
<dbReference type="PhylomeDB" id="P0A8P8"/>
<dbReference type="BioCyc" id="EcoCyc:EG11071-MONOMER"/>
<dbReference type="EvolutionaryTrace" id="P0A8P8"/>
<dbReference type="PRO" id="PR:P0A8P8"/>
<dbReference type="Proteomes" id="UP000000625">
    <property type="component" value="Chromosome"/>
</dbReference>
<dbReference type="GO" id="GO:0005737">
    <property type="term" value="C:cytoplasm"/>
    <property type="evidence" value="ECO:0007669"/>
    <property type="project" value="UniProtKB-SubCell"/>
</dbReference>
<dbReference type="GO" id="GO:0048476">
    <property type="term" value="C:Holliday junction resolvase complex"/>
    <property type="evidence" value="ECO:0000314"/>
    <property type="project" value="ComplexPortal"/>
</dbReference>
<dbReference type="GO" id="GO:0003677">
    <property type="term" value="F:DNA binding"/>
    <property type="evidence" value="ECO:0000314"/>
    <property type="project" value="EcoliWiki"/>
</dbReference>
<dbReference type="GO" id="GO:0009009">
    <property type="term" value="F:site-specific recombinase activity"/>
    <property type="evidence" value="ECO:0000314"/>
    <property type="project" value="EcoliWiki"/>
</dbReference>
<dbReference type="GO" id="GO:0009037">
    <property type="term" value="F:tyrosine-based site-specific recombinase activity"/>
    <property type="evidence" value="ECO:0000315"/>
    <property type="project" value="EcoliWiki"/>
</dbReference>
<dbReference type="GO" id="GO:0051301">
    <property type="term" value="P:cell division"/>
    <property type="evidence" value="ECO:0007669"/>
    <property type="project" value="UniProtKB-KW"/>
</dbReference>
<dbReference type="GO" id="GO:0007059">
    <property type="term" value="P:chromosome segregation"/>
    <property type="evidence" value="ECO:0000314"/>
    <property type="project" value="ComplexPortal"/>
</dbReference>
<dbReference type="GO" id="GO:0006310">
    <property type="term" value="P:DNA recombination"/>
    <property type="evidence" value="ECO:0000318"/>
    <property type="project" value="GO_Central"/>
</dbReference>
<dbReference type="GO" id="GO:0006313">
    <property type="term" value="P:DNA transposition"/>
    <property type="evidence" value="ECO:0007669"/>
    <property type="project" value="UniProtKB-UniRule"/>
</dbReference>
<dbReference type="GO" id="GO:0006276">
    <property type="term" value="P:plasmid maintenance"/>
    <property type="evidence" value="ECO:0000315"/>
    <property type="project" value="EcoliWiki"/>
</dbReference>
<dbReference type="GO" id="GO:0071139">
    <property type="term" value="P:resolution of DNA recombination intermediates"/>
    <property type="evidence" value="ECO:0000314"/>
    <property type="project" value="ComplexPortal"/>
</dbReference>
<dbReference type="GO" id="GO:0009314">
    <property type="term" value="P:response to radiation"/>
    <property type="evidence" value="ECO:0000315"/>
    <property type="project" value="EcoCyc"/>
</dbReference>
<dbReference type="CDD" id="cd00798">
    <property type="entry name" value="INT_XerDC_C"/>
    <property type="match status" value="1"/>
</dbReference>
<dbReference type="FunFam" id="1.10.150.130:FF:000002">
    <property type="entry name" value="Tyrosine recombinase XerD"/>
    <property type="match status" value="1"/>
</dbReference>
<dbReference type="FunFam" id="1.10.443.10:FF:000001">
    <property type="entry name" value="Tyrosine recombinase XerD"/>
    <property type="match status" value="1"/>
</dbReference>
<dbReference type="Gene3D" id="1.10.150.130">
    <property type="match status" value="1"/>
</dbReference>
<dbReference type="Gene3D" id="1.10.443.10">
    <property type="entry name" value="Intergrase catalytic core"/>
    <property type="match status" value="1"/>
</dbReference>
<dbReference type="HAMAP" id="MF_01808">
    <property type="entry name" value="Recomb_XerC_XerD"/>
    <property type="match status" value="1"/>
</dbReference>
<dbReference type="HAMAP" id="MF_01807">
    <property type="entry name" value="Recomb_XerD"/>
    <property type="match status" value="1"/>
</dbReference>
<dbReference type="InterPro" id="IPR044068">
    <property type="entry name" value="CB"/>
</dbReference>
<dbReference type="InterPro" id="IPR011010">
    <property type="entry name" value="DNA_brk_join_enz"/>
</dbReference>
<dbReference type="InterPro" id="IPR013762">
    <property type="entry name" value="Integrase-like_cat_sf"/>
</dbReference>
<dbReference type="InterPro" id="IPR002104">
    <property type="entry name" value="Integrase_catalytic"/>
</dbReference>
<dbReference type="InterPro" id="IPR010998">
    <property type="entry name" value="Integrase_recombinase_N"/>
</dbReference>
<dbReference type="InterPro" id="IPR004107">
    <property type="entry name" value="Integrase_SAM-like_N"/>
</dbReference>
<dbReference type="InterPro" id="IPR011932">
    <property type="entry name" value="Recomb_XerD"/>
</dbReference>
<dbReference type="InterPro" id="IPR023009">
    <property type="entry name" value="Tyrosine_recombinase_XerC/XerD"/>
</dbReference>
<dbReference type="InterPro" id="IPR050090">
    <property type="entry name" value="Tyrosine_recombinase_XerCD"/>
</dbReference>
<dbReference type="NCBIfam" id="NF001399">
    <property type="entry name" value="PRK00283.1"/>
    <property type="match status" value="1"/>
</dbReference>
<dbReference type="NCBIfam" id="TIGR02225">
    <property type="entry name" value="recomb_XerD"/>
    <property type="match status" value="1"/>
</dbReference>
<dbReference type="PANTHER" id="PTHR30349">
    <property type="entry name" value="PHAGE INTEGRASE-RELATED"/>
    <property type="match status" value="1"/>
</dbReference>
<dbReference type="PANTHER" id="PTHR30349:SF90">
    <property type="entry name" value="TYROSINE RECOMBINASE XERD"/>
    <property type="match status" value="1"/>
</dbReference>
<dbReference type="Pfam" id="PF02899">
    <property type="entry name" value="Phage_int_SAM_1"/>
    <property type="match status" value="1"/>
</dbReference>
<dbReference type="Pfam" id="PF00589">
    <property type="entry name" value="Phage_integrase"/>
    <property type="match status" value="1"/>
</dbReference>
<dbReference type="SUPFAM" id="SSF56349">
    <property type="entry name" value="DNA breaking-rejoining enzymes"/>
    <property type="match status" value="1"/>
</dbReference>
<dbReference type="SUPFAM" id="SSF47823">
    <property type="entry name" value="lambda integrase-like, N-terminal domain"/>
    <property type="match status" value="1"/>
</dbReference>
<dbReference type="PROSITE" id="PS51900">
    <property type="entry name" value="CB"/>
    <property type="match status" value="1"/>
</dbReference>
<dbReference type="PROSITE" id="PS51898">
    <property type="entry name" value="TYR_RECOMBINASE"/>
    <property type="match status" value="1"/>
</dbReference>
<evidence type="ECO:0000250" key="1"/>
<evidence type="ECO:0000255" key="2">
    <source>
        <dbReference type="PROSITE-ProRule" id="PRU01246"/>
    </source>
</evidence>
<evidence type="ECO:0000255" key="3">
    <source>
        <dbReference type="PROSITE-ProRule" id="PRU01248"/>
    </source>
</evidence>
<evidence type="ECO:0000269" key="4">
    <source>
    </source>
</evidence>
<evidence type="ECO:0000269" key="5">
    <source>
    </source>
</evidence>
<evidence type="ECO:0000269" key="6">
    <source>
    </source>
</evidence>
<evidence type="ECO:0000269" key="7">
    <source>
    </source>
</evidence>
<evidence type="ECO:0000269" key="8">
    <source>
    </source>
</evidence>
<evidence type="ECO:0000269" key="9">
    <source>
    </source>
</evidence>
<evidence type="ECO:0000305" key="10"/>
<evidence type="ECO:0007829" key="11">
    <source>
        <dbReference type="PDB" id="1A0P"/>
    </source>
</evidence>
<comment type="function">
    <text evidence="1 7 9">Site-specific tyrosine recombinase, which acts by catalyzing the cutting and rejoining of the recombining DNA molecules. Binds cooperatively to specific DNA consensus sequences that are separated from XerC binding sites by a short central region, forming the heterotetrameric XerC-XerD complex that recombines DNA substrates. The complex is essential to convert dimers of the bacterial chromosome into monomers to permit their segregation at cell division. It also contributes to the segregational stability of plasmids at ColE1 xer (or cer) and pSC101 (or psi) sites. In the complex XerD specifically exchanges the bottom DNA strands (By similarity).</text>
</comment>
<comment type="activity regulation">
    <text evidence="5 6">During recombination, the heterotetrameric complex catalyzes two consecutive pairs of strand exchanges, implying that specific pairs of active sites are sequentially switched on and off in the recombinase tetramer to ensure that appropriate DNA strands will be exchanged at both reaction steps. FtsK plays a central role in this catalytic state switch that turns recombinase on and off reciprocally. The reciprocal C-terminal interaction between XerC and XerD may also participate in the enzymatic switch process.</text>
</comment>
<comment type="subunit">
    <text evidence="4">Forms a cyclic heterotetrameric complex composed of two molecules of XerC and two molecules of XerD, in which XerC interacts with XerD via its C-terminal region, XerD interacts with XerC via its C-terminal region and so on.</text>
</comment>
<comment type="subcellular location">
    <subcellularLocation>
        <location evidence="1">Cytoplasm</location>
    </subcellularLocation>
</comment>
<comment type="similarity">
    <text evidence="10">Belongs to the 'phage' integrase family. XerD subfamily.</text>
</comment>